<reference key="1">
    <citation type="journal article" date="2001" name="Cell">
        <title>CED-12/ELMO, a novel member of the CrkII/Dock180/Rac pathway, is required for phagocytosis and cell migration.</title>
        <authorList>
            <person name="Gumienny T.L."/>
            <person name="Brugnera E."/>
            <person name="Tosello-Trampont A.-C."/>
            <person name="Kinchen J.M."/>
            <person name="Haney L.B."/>
            <person name="Nishiwaki K."/>
            <person name="Walk S.F."/>
            <person name="Nemergut M.E."/>
            <person name="Macara I.G."/>
            <person name="Francis R."/>
            <person name="Schedl T."/>
            <person name="Qin Y."/>
            <person name="Van Aelst L."/>
            <person name="Hengartner M.O."/>
            <person name="Ravichandran K.S."/>
        </authorList>
    </citation>
    <scope>NUCLEOTIDE SEQUENCE [MRNA] (ISOFORM 1)</scope>
    <scope>TISSUE SPECIFICITY</scope>
    <scope>FUNCTION</scope>
    <scope>INTERACTION WITH DOCK1</scope>
</reference>
<reference key="2">
    <citation type="journal article" date="2001" name="Dev. Cell">
        <title>The C. elegans PH domain protein CED-12 regulates cytoskeletal reorganization via a Rho/Rac GTPase signaling pathway.</title>
        <authorList>
            <person name="Zhou Z."/>
            <person name="Caron E."/>
            <person name="Hartwieg E."/>
            <person name="Hall A."/>
            <person name="Horvitz H.R."/>
        </authorList>
    </citation>
    <scope>NUCLEOTIDE SEQUENCE [MRNA] (ISOFORM 1)</scope>
    <scope>FUNCTION</scope>
    <source>
        <tissue>Testis</tissue>
    </source>
</reference>
<reference key="3">
    <citation type="journal article" date="2001" name="DNA Res.">
        <title>Prediction of the coding sequences of unidentified human genes. XX. The complete sequences of 100 new cDNA clones from brain which code for large proteins in vitro.</title>
        <authorList>
            <person name="Nagase T."/>
            <person name="Nakayama M."/>
            <person name="Nakajima D."/>
            <person name="Kikuno R."/>
            <person name="Ohara O."/>
        </authorList>
    </citation>
    <scope>NUCLEOTIDE SEQUENCE [LARGE SCALE MRNA] (ISOFORM 1)</scope>
    <source>
        <tissue>Brain</tissue>
    </source>
</reference>
<reference key="4">
    <citation type="journal article" date="2004" name="Nat. Genet.">
        <title>Complete sequencing and characterization of 21,243 full-length human cDNAs.</title>
        <authorList>
            <person name="Ota T."/>
            <person name="Suzuki Y."/>
            <person name="Nishikawa T."/>
            <person name="Otsuki T."/>
            <person name="Sugiyama T."/>
            <person name="Irie R."/>
            <person name="Wakamatsu A."/>
            <person name="Hayashi K."/>
            <person name="Sato H."/>
            <person name="Nagai K."/>
            <person name="Kimura K."/>
            <person name="Makita H."/>
            <person name="Sekine M."/>
            <person name="Obayashi M."/>
            <person name="Nishi T."/>
            <person name="Shibahara T."/>
            <person name="Tanaka T."/>
            <person name="Ishii S."/>
            <person name="Yamamoto J."/>
            <person name="Saito K."/>
            <person name="Kawai Y."/>
            <person name="Isono Y."/>
            <person name="Nakamura Y."/>
            <person name="Nagahari K."/>
            <person name="Murakami K."/>
            <person name="Yasuda T."/>
            <person name="Iwayanagi T."/>
            <person name="Wagatsuma M."/>
            <person name="Shiratori A."/>
            <person name="Sudo H."/>
            <person name="Hosoiri T."/>
            <person name="Kaku Y."/>
            <person name="Kodaira H."/>
            <person name="Kondo H."/>
            <person name="Sugawara M."/>
            <person name="Takahashi M."/>
            <person name="Kanda K."/>
            <person name="Yokoi T."/>
            <person name="Furuya T."/>
            <person name="Kikkawa E."/>
            <person name="Omura Y."/>
            <person name="Abe K."/>
            <person name="Kamihara K."/>
            <person name="Katsuta N."/>
            <person name="Sato K."/>
            <person name="Tanikawa M."/>
            <person name="Yamazaki M."/>
            <person name="Ninomiya K."/>
            <person name="Ishibashi T."/>
            <person name="Yamashita H."/>
            <person name="Murakawa K."/>
            <person name="Fujimori K."/>
            <person name="Tanai H."/>
            <person name="Kimata M."/>
            <person name="Watanabe M."/>
            <person name="Hiraoka S."/>
            <person name="Chiba Y."/>
            <person name="Ishida S."/>
            <person name="Ono Y."/>
            <person name="Takiguchi S."/>
            <person name="Watanabe S."/>
            <person name="Yosida M."/>
            <person name="Hotuta T."/>
            <person name="Kusano J."/>
            <person name="Kanehori K."/>
            <person name="Takahashi-Fujii A."/>
            <person name="Hara H."/>
            <person name="Tanase T.-O."/>
            <person name="Nomura Y."/>
            <person name="Togiya S."/>
            <person name="Komai F."/>
            <person name="Hara R."/>
            <person name="Takeuchi K."/>
            <person name="Arita M."/>
            <person name="Imose N."/>
            <person name="Musashino K."/>
            <person name="Yuuki H."/>
            <person name="Oshima A."/>
            <person name="Sasaki N."/>
            <person name="Aotsuka S."/>
            <person name="Yoshikawa Y."/>
            <person name="Matsunawa H."/>
            <person name="Ichihara T."/>
            <person name="Shiohata N."/>
            <person name="Sano S."/>
            <person name="Moriya S."/>
            <person name="Momiyama H."/>
            <person name="Satoh N."/>
            <person name="Takami S."/>
            <person name="Terashima Y."/>
            <person name="Suzuki O."/>
            <person name="Nakagawa S."/>
            <person name="Senoh A."/>
            <person name="Mizoguchi H."/>
            <person name="Goto Y."/>
            <person name="Shimizu F."/>
            <person name="Wakebe H."/>
            <person name="Hishigaki H."/>
            <person name="Watanabe T."/>
            <person name="Sugiyama A."/>
            <person name="Takemoto M."/>
            <person name="Kawakami B."/>
            <person name="Yamazaki M."/>
            <person name="Watanabe K."/>
            <person name="Kumagai A."/>
            <person name="Itakura S."/>
            <person name="Fukuzumi Y."/>
            <person name="Fujimori Y."/>
            <person name="Komiyama M."/>
            <person name="Tashiro H."/>
            <person name="Tanigami A."/>
            <person name="Fujiwara T."/>
            <person name="Ono T."/>
            <person name="Yamada K."/>
            <person name="Fujii Y."/>
            <person name="Ozaki K."/>
            <person name="Hirao M."/>
            <person name="Ohmori Y."/>
            <person name="Kawabata A."/>
            <person name="Hikiji T."/>
            <person name="Kobatake N."/>
            <person name="Inagaki H."/>
            <person name="Ikema Y."/>
            <person name="Okamoto S."/>
            <person name="Okitani R."/>
            <person name="Kawakami T."/>
            <person name="Noguchi S."/>
            <person name="Itoh T."/>
            <person name="Shigeta K."/>
            <person name="Senba T."/>
            <person name="Matsumura K."/>
            <person name="Nakajima Y."/>
            <person name="Mizuno T."/>
            <person name="Morinaga M."/>
            <person name="Sasaki M."/>
            <person name="Togashi T."/>
            <person name="Oyama M."/>
            <person name="Hata H."/>
            <person name="Watanabe M."/>
            <person name="Komatsu T."/>
            <person name="Mizushima-Sugano J."/>
            <person name="Satoh T."/>
            <person name="Shirai Y."/>
            <person name="Takahashi Y."/>
            <person name="Nakagawa K."/>
            <person name="Okumura K."/>
            <person name="Nagase T."/>
            <person name="Nomura N."/>
            <person name="Kikuchi H."/>
            <person name="Masuho Y."/>
            <person name="Yamashita R."/>
            <person name="Nakai K."/>
            <person name="Yada T."/>
            <person name="Nakamura Y."/>
            <person name="Ohara O."/>
            <person name="Isogai T."/>
            <person name="Sugano S."/>
        </authorList>
    </citation>
    <scope>NUCLEOTIDE SEQUENCE [LARGE SCALE MRNA] (ISOFORM 1)</scope>
    <source>
        <tissue>Embryo</tissue>
        <tissue>Neuroepithelioma</tissue>
        <tissue>Teratocarcinoma</tissue>
    </source>
</reference>
<reference key="5">
    <citation type="journal article" date="2001" name="Nature">
        <title>The DNA sequence and comparative analysis of human chromosome 20.</title>
        <authorList>
            <person name="Deloukas P."/>
            <person name="Matthews L.H."/>
            <person name="Ashurst J.L."/>
            <person name="Burton J."/>
            <person name="Gilbert J.G.R."/>
            <person name="Jones M."/>
            <person name="Stavrides G."/>
            <person name="Almeida J.P."/>
            <person name="Babbage A.K."/>
            <person name="Bagguley C.L."/>
            <person name="Bailey J."/>
            <person name="Barlow K.F."/>
            <person name="Bates K.N."/>
            <person name="Beard L.M."/>
            <person name="Beare D.M."/>
            <person name="Beasley O.P."/>
            <person name="Bird C.P."/>
            <person name="Blakey S.E."/>
            <person name="Bridgeman A.M."/>
            <person name="Brown A.J."/>
            <person name="Buck D."/>
            <person name="Burrill W.D."/>
            <person name="Butler A.P."/>
            <person name="Carder C."/>
            <person name="Carter N.P."/>
            <person name="Chapman J.C."/>
            <person name="Clamp M."/>
            <person name="Clark G."/>
            <person name="Clark L.N."/>
            <person name="Clark S.Y."/>
            <person name="Clee C.M."/>
            <person name="Clegg S."/>
            <person name="Cobley V.E."/>
            <person name="Collier R.E."/>
            <person name="Connor R.E."/>
            <person name="Corby N.R."/>
            <person name="Coulson A."/>
            <person name="Coville G.J."/>
            <person name="Deadman R."/>
            <person name="Dhami P.D."/>
            <person name="Dunn M."/>
            <person name="Ellington A.G."/>
            <person name="Frankland J.A."/>
            <person name="Fraser A."/>
            <person name="French L."/>
            <person name="Garner P."/>
            <person name="Grafham D.V."/>
            <person name="Griffiths C."/>
            <person name="Griffiths M.N.D."/>
            <person name="Gwilliam R."/>
            <person name="Hall R.E."/>
            <person name="Hammond S."/>
            <person name="Harley J.L."/>
            <person name="Heath P.D."/>
            <person name="Ho S."/>
            <person name="Holden J.L."/>
            <person name="Howden P.J."/>
            <person name="Huckle E."/>
            <person name="Hunt A.R."/>
            <person name="Hunt S.E."/>
            <person name="Jekosch K."/>
            <person name="Johnson C.M."/>
            <person name="Johnson D."/>
            <person name="Kay M.P."/>
            <person name="Kimberley A.M."/>
            <person name="King A."/>
            <person name="Knights A."/>
            <person name="Laird G.K."/>
            <person name="Lawlor S."/>
            <person name="Lehvaeslaiho M.H."/>
            <person name="Leversha M.A."/>
            <person name="Lloyd C."/>
            <person name="Lloyd D.M."/>
            <person name="Lovell J.D."/>
            <person name="Marsh V.L."/>
            <person name="Martin S.L."/>
            <person name="McConnachie L.J."/>
            <person name="McLay K."/>
            <person name="McMurray A.A."/>
            <person name="Milne S.A."/>
            <person name="Mistry D."/>
            <person name="Moore M.J.F."/>
            <person name="Mullikin J.C."/>
            <person name="Nickerson T."/>
            <person name="Oliver K."/>
            <person name="Parker A."/>
            <person name="Patel R."/>
            <person name="Pearce T.A.V."/>
            <person name="Peck A.I."/>
            <person name="Phillimore B.J.C.T."/>
            <person name="Prathalingam S.R."/>
            <person name="Plumb R.W."/>
            <person name="Ramsay H."/>
            <person name="Rice C.M."/>
            <person name="Ross M.T."/>
            <person name="Scott C.E."/>
            <person name="Sehra H.K."/>
            <person name="Shownkeen R."/>
            <person name="Sims S."/>
            <person name="Skuce C.D."/>
            <person name="Smith M.L."/>
            <person name="Soderlund C."/>
            <person name="Steward C.A."/>
            <person name="Sulston J.E."/>
            <person name="Swann R.M."/>
            <person name="Sycamore N."/>
            <person name="Taylor R."/>
            <person name="Tee L."/>
            <person name="Thomas D.W."/>
            <person name="Thorpe A."/>
            <person name="Tracey A."/>
            <person name="Tromans A.C."/>
            <person name="Vaudin M."/>
            <person name="Wall M."/>
            <person name="Wallis J.M."/>
            <person name="Whitehead S.L."/>
            <person name="Whittaker P."/>
            <person name="Willey D.L."/>
            <person name="Williams L."/>
            <person name="Williams S.A."/>
            <person name="Wilming L."/>
            <person name="Wray P.W."/>
            <person name="Hubbard T."/>
            <person name="Durbin R.M."/>
            <person name="Bentley D.R."/>
            <person name="Beck S."/>
            <person name="Rogers J."/>
        </authorList>
    </citation>
    <scope>NUCLEOTIDE SEQUENCE [LARGE SCALE GENOMIC DNA]</scope>
</reference>
<reference key="6">
    <citation type="submission" date="2005-09" db="EMBL/GenBank/DDBJ databases">
        <authorList>
            <person name="Mural R.J."/>
            <person name="Istrail S."/>
            <person name="Sutton G.G."/>
            <person name="Florea L."/>
            <person name="Halpern A.L."/>
            <person name="Mobarry C.M."/>
            <person name="Lippert R."/>
            <person name="Walenz B."/>
            <person name="Shatkay H."/>
            <person name="Dew I."/>
            <person name="Miller J.R."/>
            <person name="Flanigan M.J."/>
            <person name="Edwards N.J."/>
            <person name="Bolanos R."/>
            <person name="Fasulo D."/>
            <person name="Halldorsson B.V."/>
            <person name="Hannenhalli S."/>
            <person name="Turner R."/>
            <person name="Yooseph S."/>
            <person name="Lu F."/>
            <person name="Nusskern D.R."/>
            <person name="Shue B.C."/>
            <person name="Zheng X.H."/>
            <person name="Zhong F."/>
            <person name="Delcher A.L."/>
            <person name="Huson D.H."/>
            <person name="Kravitz S.A."/>
            <person name="Mouchard L."/>
            <person name="Reinert K."/>
            <person name="Remington K.A."/>
            <person name="Clark A.G."/>
            <person name="Waterman M.S."/>
            <person name="Eichler E.E."/>
            <person name="Adams M.D."/>
            <person name="Hunkapiller M.W."/>
            <person name="Myers E.W."/>
            <person name="Venter J.C."/>
        </authorList>
    </citation>
    <scope>NUCLEOTIDE SEQUENCE [LARGE SCALE GENOMIC DNA]</scope>
</reference>
<reference key="7">
    <citation type="journal article" date="2004" name="Genome Res.">
        <title>The status, quality, and expansion of the NIH full-length cDNA project: the Mammalian Gene Collection (MGC).</title>
        <authorList>
            <consortium name="The MGC Project Team"/>
        </authorList>
    </citation>
    <scope>NUCLEOTIDE SEQUENCE [LARGE SCALE MRNA] (ISOFORM 2)</scope>
    <source>
        <tissue>Cervix</tissue>
    </source>
</reference>
<reference key="8">
    <citation type="journal article" date="2010" name="J. Cell Biol.">
        <title>Ephexin4 and EphA2 mediate cell migration through a RhoG-dependent mechanism.</title>
        <authorList>
            <person name="Hiramoto-Yamaki N."/>
            <person name="Takeuchi S."/>
            <person name="Ueda S."/>
            <person name="Harada K."/>
            <person name="Fujimoto S."/>
            <person name="Negishi M."/>
            <person name="Katoh H."/>
        </authorList>
    </citation>
    <scope>FUNCTION</scope>
    <scope>INTERACTION WITH ARHGEF16; DOCK4 AND EPHA2</scope>
    <scope>SUBCELLULAR LOCATION</scope>
</reference>
<reference key="9">
    <citation type="journal article" date="2011" name="BMC Syst. Biol.">
        <title>Initial characterization of the human central proteome.</title>
        <authorList>
            <person name="Burkard T.R."/>
            <person name="Planyavsky M."/>
            <person name="Kaupe I."/>
            <person name="Breitwieser F.P."/>
            <person name="Buerckstuemmer T."/>
            <person name="Bennett K.L."/>
            <person name="Superti-Furga G."/>
            <person name="Colinge J."/>
        </authorList>
    </citation>
    <scope>IDENTIFICATION BY MASS SPECTROMETRY [LARGE SCALE ANALYSIS]</scope>
</reference>
<reference key="10">
    <citation type="journal article" date="2013" name="J. Proteome Res.">
        <title>Toward a comprehensive characterization of a human cancer cell phosphoproteome.</title>
        <authorList>
            <person name="Zhou H."/>
            <person name="Di Palma S."/>
            <person name="Preisinger C."/>
            <person name="Peng M."/>
            <person name="Polat A.N."/>
            <person name="Heck A.J."/>
            <person name="Mohammed S."/>
        </authorList>
    </citation>
    <scope>PHOSPHORYLATION [LARGE SCALE ANALYSIS] AT SER-503</scope>
    <scope>IDENTIFICATION BY MASS SPECTROMETRY [LARGE SCALE ANALYSIS]</scope>
    <source>
        <tissue>Cervix carcinoma</tissue>
        <tissue>Erythroleukemia</tissue>
    </source>
</reference>
<reference key="11">
    <citation type="journal article" date="2014" name="Proc. Natl. Acad. Sci. U.S.A.">
        <title>G-protein coupled receptor BAI3 promotes myoblast fusion in vertebrates.</title>
        <authorList>
            <person name="Hamoud N."/>
            <person name="Tran V."/>
            <person name="Croteau L.P."/>
            <person name="Kania A."/>
            <person name="Cote J.F."/>
        </authorList>
    </citation>
    <scope>INTERACTION WITH ADGRB3</scope>
</reference>
<reference key="12">
    <citation type="journal article" date="2016" name="Am. J. Hum. Genet.">
        <title>Loss-of-function mutations in ELMO2 cause intraosseous vascular malformation by impeding RAC1 signaling.</title>
        <authorList>
            <person name="Cetinkaya A."/>
            <person name="Xiong J.R."/>
            <person name="Vargel I."/>
            <person name="Koesemehmetoglu K."/>
            <person name="Canter H.I."/>
            <person name="Gerdan O.F."/>
            <person name="Longo N."/>
            <person name="Alzahrani A."/>
            <person name="Camps M.P."/>
            <person name="Taskiran E.Z."/>
            <person name="Laupheimer S."/>
            <person name="Botto L.D."/>
            <person name="Paramalingam E."/>
            <person name="Gormez Z."/>
            <person name="Uz E."/>
            <person name="Yuksel B."/>
            <person name="Ruacan S."/>
            <person name="Sagiroglu M.S."/>
            <person name="Takahashi T."/>
            <person name="Reversade B."/>
            <person name="Akarsu N.A."/>
        </authorList>
    </citation>
    <scope>FUNCTION</scope>
    <scope>INVOLVEMENT IN VMPI</scope>
</reference>
<sequence>MPPPSDIVKVAIEWPGANAQLLEIDQKRPLASIIKEVCDGWSLPNPEYYTLRYADGPQLYITEQTRSDIKNGTILQLAISPSRAARQLMERTQSSNMETRLDAMKELAKLSADVTFATEFINMDGIIVLTRLVESGTKLLSHYSEMLAFTLTAFLELMDHGIVSWDMVSITFIKQIAGYVSQPMVDVSILQRSLAILESMVLNSQSLYQKIAEEITVGQLISHLQVSNQEIQTYAIALINALFLKAPEDKRQDMANAFAQKHLRSIILNHVIRGNRPIKTEMAHQLYVLQVLTFNLLEERMMTKMDPNDQAQRDIIFELRRIAFDAESDPSNAPGSGTEKRKAMYTKDYKMLGFTNHINPAMDFTQTPPGMLALDNMLYLAKVHQDTYIRIVLENSSREDKHECPFGRSAIELTKMLCEILQVGELPNEGRNDYHPMFFTHDRAFEELFGICIQLLNKTWKEMRATAEDFNKVMQVVREQITRALPSKPNSLDQFKSKLRSLSYSEILRLRQSERMSQDDFQSPPIVELREKIQPEILELIKQQRLNRLCEGSSFRKIGNRRRQERFWYCRLALNHKVLHYGDLDDNPQGEVTFESLQEKIPVADIKAIVTGKDCPHMKEKSALKQNKEVLELAFSILYDPDETLNFIAPNKYEYCIWIDGLSALLGKDMSSELTKSDLDTLLSMEMKLRLLDLENIQIPEAPPPIPKEPSSYDFVYHYG</sequence>
<comment type="function">
    <text evidence="3 4 5 7">Involved in cytoskeletal rearrangements required for phagocytosis of apoptotic cells and cell motility. Acts in association with DOCK1 and CRK. Was initially proposed to be required in complex with DOCK1 to activate Rac Rho small GTPases. May enhance the guanine nucleotide exchange factor (GEF) activity of DOCK1.</text>
</comment>
<comment type="subunit">
    <text evidence="1 3 5 6">Interacts with the SH3-domain of DOCK1 via its SH3-binding site. Probably part of a complex with DOCK1 and RAC1. Probably part of a complex with DOCK1 and CRK isoform CRK-II. Interacts with ARHGEF16, DOCK4 and EPHA2; mediates activation of RAC1 by EPHA2 (PubMed:20679435). Interacts with ADGRB3 (PubMed:24567399). Interacts with AUTS2; the interaction is direct (By similarity).</text>
</comment>
<comment type="interaction">
    <interactant intactId="EBI-3959230">
        <id>Q96JJ3</id>
    </interactant>
    <interactant intactId="EBI-13336133">
        <id>Q149N5</id>
        <label>DOCK4</label>
    </interactant>
    <organismsDiffer>false</organismsDiffer>
    <experiments>3</experiments>
</comment>
<comment type="subcellular location">
    <subcellularLocation>
        <location evidence="5">Cytoplasm</location>
    </subcellularLocation>
    <subcellularLocation>
        <location evidence="5">Cytoplasm</location>
        <location evidence="5">Cytosol</location>
    </subcellularLocation>
    <subcellularLocation>
        <location evidence="5">Membrane</location>
    </subcellularLocation>
</comment>
<comment type="alternative products">
    <event type="alternative splicing"/>
    <isoform>
        <id>Q96JJ3-1</id>
        <name>1</name>
        <sequence type="displayed"/>
    </isoform>
    <isoform>
        <id>Q96JJ3-3</id>
        <name>2</name>
        <sequence type="described" ref="VSP_055477"/>
    </isoform>
</comment>
<comment type="tissue specificity">
    <text evidence="3">Widely expressed, with a higher expression in skeletal muscle, kidney and placenta.</text>
</comment>
<comment type="disease" evidence="7">
    <disease id="DI-04828">
        <name>Vascular malformation, primary intraosseous</name>
        <acronym>VMPI</acronym>
        <description>An autosomal recessive, rare malformation characterized by non-neoplastic severe expansions of blood vessels, usually seen in the vertebral column and in the skull. The most commonly affected bones in the skull are the mandible and the maxilla, and life-threatening bleeding after a simple tooth extraction is frequently observed.</description>
        <dbReference type="MIM" id="606893"/>
    </disease>
    <text>The disease is caused by variants affecting the gene represented in this entry.</text>
</comment>
<comment type="sequence caution" evidence="9">
    <conflict type="erroneous initiation">
        <sequence resource="EMBL-CDS" id="BAB13879"/>
    </conflict>
    <text>Truncated N-terminus.</text>
</comment>
<comment type="sequence caution" evidence="9">
    <conflict type="erroneous initiation">
        <sequence resource="EMBL-CDS" id="BAB14210"/>
    </conflict>
    <text>Truncated N-terminus.</text>
</comment>
<comment type="sequence caution" evidence="9">
    <conflict type="erroneous initiation">
        <sequence resource="EMBL-CDS" id="BAB14405"/>
    </conflict>
    <text>Truncated N-terminus.</text>
</comment>
<comment type="sequence caution" evidence="9">
    <conflict type="erroneous initiation">
        <sequence resource="EMBL-CDS" id="BAB47463"/>
    </conflict>
    <text>Extended N-terminus.</text>
</comment>
<organism>
    <name type="scientific">Homo sapiens</name>
    <name type="common">Human</name>
    <dbReference type="NCBI Taxonomy" id="9606"/>
    <lineage>
        <taxon>Eukaryota</taxon>
        <taxon>Metazoa</taxon>
        <taxon>Chordata</taxon>
        <taxon>Craniata</taxon>
        <taxon>Vertebrata</taxon>
        <taxon>Euteleostomi</taxon>
        <taxon>Mammalia</taxon>
        <taxon>Eutheria</taxon>
        <taxon>Euarchontoglires</taxon>
        <taxon>Primates</taxon>
        <taxon>Haplorrhini</taxon>
        <taxon>Catarrhini</taxon>
        <taxon>Hominidae</taxon>
        <taxon>Homo</taxon>
    </lineage>
</organism>
<dbReference type="EMBL" id="AF398886">
    <property type="protein sequence ID" value="AAL14467.1"/>
    <property type="molecule type" value="Transcribed_RNA"/>
</dbReference>
<dbReference type="EMBL" id="AF417861">
    <property type="protein sequence ID" value="AAL38512.1"/>
    <property type="molecule type" value="mRNA"/>
</dbReference>
<dbReference type="EMBL" id="AB058737">
    <property type="protein sequence ID" value="BAB47463.1"/>
    <property type="status" value="ALT_INIT"/>
    <property type="molecule type" value="mRNA"/>
</dbReference>
<dbReference type="EMBL" id="AK021718">
    <property type="protein sequence ID" value="BAB13879.1"/>
    <property type="status" value="ALT_INIT"/>
    <property type="molecule type" value="mRNA"/>
</dbReference>
<dbReference type="EMBL" id="AK022731">
    <property type="protein sequence ID" value="BAB14210.1"/>
    <property type="status" value="ALT_INIT"/>
    <property type="molecule type" value="mRNA"/>
</dbReference>
<dbReference type="EMBL" id="AK023103">
    <property type="protein sequence ID" value="BAB14405.1"/>
    <property type="status" value="ALT_INIT"/>
    <property type="molecule type" value="mRNA"/>
</dbReference>
<dbReference type="EMBL" id="AK057032">
    <property type="protein sequence ID" value="BAB71350.1"/>
    <property type="molecule type" value="mRNA"/>
</dbReference>
<dbReference type="EMBL" id="AL031686">
    <property type="status" value="NOT_ANNOTATED_CDS"/>
    <property type="molecule type" value="Genomic_DNA"/>
</dbReference>
<dbReference type="EMBL" id="AL133227">
    <property type="status" value="NOT_ANNOTATED_CDS"/>
    <property type="molecule type" value="Genomic_DNA"/>
</dbReference>
<dbReference type="EMBL" id="CH471077">
    <property type="protein sequence ID" value="EAW75739.1"/>
    <property type="molecule type" value="Genomic_DNA"/>
</dbReference>
<dbReference type="EMBL" id="CH471077">
    <property type="protein sequence ID" value="EAW75743.1"/>
    <property type="molecule type" value="Genomic_DNA"/>
</dbReference>
<dbReference type="EMBL" id="CH471077">
    <property type="protein sequence ID" value="EAW75745.1"/>
    <property type="molecule type" value="Genomic_DNA"/>
</dbReference>
<dbReference type="EMBL" id="CH471077">
    <property type="protein sequence ID" value="EAW75746.1"/>
    <property type="molecule type" value="Genomic_DNA"/>
</dbReference>
<dbReference type="EMBL" id="BC000143">
    <property type="protein sequence ID" value="AAH00143.2"/>
    <property type="molecule type" value="mRNA"/>
</dbReference>
<dbReference type="CCDS" id="CCDS13398.1">
    <molecule id="Q96JJ3-1"/>
</dbReference>
<dbReference type="CCDS" id="CCDS82623.1">
    <molecule id="Q96JJ3-3"/>
</dbReference>
<dbReference type="RefSeq" id="NP_001305182.1">
    <molecule id="Q96JJ3-3"/>
    <property type="nucleotide sequence ID" value="NM_001318253.2"/>
</dbReference>
<dbReference type="RefSeq" id="NP_573403.1">
    <molecule id="Q96JJ3-1"/>
    <property type="nucleotide sequence ID" value="NM_133171.5"/>
</dbReference>
<dbReference type="RefSeq" id="NP_877496.1">
    <molecule id="Q96JJ3-1"/>
    <property type="nucleotide sequence ID" value="NM_182764.3"/>
</dbReference>
<dbReference type="RefSeq" id="XP_005260553.1">
    <molecule id="Q96JJ3-1"/>
    <property type="nucleotide sequence ID" value="XM_005260496.4"/>
</dbReference>
<dbReference type="RefSeq" id="XP_005260555.1">
    <property type="nucleotide sequence ID" value="XM_005260498.3"/>
</dbReference>
<dbReference type="RefSeq" id="XP_005260556.1">
    <property type="nucleotide sequence ID" value="XM_005260499.3"/>
</dbReference>
<dbReference type="RefSeq" id="XP_005260557.1">
    <property type="nucleotide sequence ID" value="XM_005260500.3"/>
</dbReference>
<dbReference type="RefSeq" id="XP_006723917.1">
    <molecule id="Q96JJ3-1"/>
    <property type="nucleotide sequence ID" value="XM_006723854.4"/>
</dbReference>
<dbReference type="RefSeq" id="XP_047296317.1">
    <molecule id="Q96JJ3-3"/>
    <property type="nucleotide sequence ID" value="XM_047440361.1"/>
</dbReference>
<dbReference type="RefSeq" id="XP_054179786.1">
    <molecule id="Q96JJ3-1"/>
    <property type="nucleotide sequence ID" value="XM_054323811.1"/>
</dbReference>
<dbReference type="RefSeq" id="XP_054179787.1">
    <molecule id="Q96JJ3-1"/>
    <property type="nucleotide sequence ID" value="XM_054323812.1"/>
</dbReference>
<dbReference type="RefSeq" id="XP_054179788.1">
    <molecule id="Q96JJ3-3"/>
    <property type="nucleotide sequence ID" value="XM_054323813.1"/>
</dbReference>
<dbReference type="PDB" id="6IDX">
    <property type="method" value="X-ray"/>
    <property type="resolution" value="1.70 A"/>
    <property type="chains" value="A=1-520"/>
</dbReference>
<dbReference type="PDB" id="6IE1">
    <property type="method" value="X-ray"/>
    <property type="resolution" value="2.48 A"/>
    <property type="chains" value="A=1-520"/>
</dbReference>
<dbReference type="PDBsum" id="6IDX"/>
<dbReference type="PDBsum" id="6IE1"/>
<dbReference type="SMR" id="Q96JJ3"/>
<dbReference type="BioGRID" id="121987">
    <property type="interactions" value="64"/>
</dbReference>
<dbReference type="CORUM" id="Q96JJ3"/>
<dbReference type="FunCoup" id="Q96JJ3">
    <property type="interactions" value="1369"/>
</dbReference>
<dbReference type="IntAct" id="Q96JJ3">
    <property type="interactions" value="27"/>
</dbReference>
<dbReference type="STRING" id="9606.ENSP00000290246"/>
<dbReference type="iPTMnet" id="Q96JJ3"/>
<dbReference type="MetOSite" id="Q96JJ3"/>
<dbReference type="PhosphoSitePlus" id="Q96JJ3"/>
<dbReference type="SwissPalm" id="Q96JJ3"/>
<dbReference type="BioMuta" id="ELMO2"/>
<dbReference type="DMDM" id="30913107"/>
<dbReference type="CPTAC" id="CPTAC-1765"/>
<dbReference type="jPOST" id="Q96JJ3"/>
<dbReference type="MassIVE" id="Q96JJ3"/>
<dbReference type="PaxDb" id="9606-ENSP00000290246"/>
<dbReference type="PeptideAtlas" id="Q96JJ3"/>
<dbReference type="ProteomicsDB" id="69288"/>
<dbReference type="ProteomicsDB" id="76970">
    <molecule id="Q96JJ3-1"/>
</dbReference>
<dbReference type="Pumba" id="Q96JJ3"/>
<dbReference type="Antibodypedia" id="13191">
    <property type="antibodies" value="245 antibodies from 31 providers"/>
</dbReference>
<dbReference type="DNASU" id="63916"/>
<dbReference type="Ensembl" id="ENST00000290246.11">
    <molecule id="Q96JJ3-1"/>
    <property type="protein sequence ID" value="ENSP00000290246.6"/>
    <property type="gene ID" value="ENSG00000062598.18"/>
</dbReference>
<dbReference type="Ensembl" id="ENST00000372176.5">
    <molecule id="Q96JJ3-3"/>
    <property type="protein sequence ID" value="ENSP00000361249.1"/>
    <property type="gene ID" value="ENSG00000062598.18"/>
</dbReference>
<dbReference type="Ensembl" id="ENST00000396391.5">
    <molecule id="Q96JJ3-1"/>
    <property type="protein sequence ID" value="ENSP00000379673.1"/>
    <property type="gene ID" value="ENSG00000062598.18"/>
</dbReference>
<dbReference type="GeneID" id="63916"/>
<dbReference type="KEGG" id="hsa:63916"/>
<dbReference type="MANE-Select" id="ENST00000290246.11">
    <property type="protein sequence ID" value="ENSP00000290246.6"/>
    <property type="RefSeq nucleotide sequence ID" value="NM_133171.5"/>
    <property type="RefSeq protein sequence ID" value="NP_573403.1"/>
</dbReference>
<dbReference type="UCSC" id="uc002xrt.2">
    <molecule id="Q96JJ3-1"/>
    <property type="organism name" value="human"/>
</dbReference>
<dbReference type="AGR" id="HGNC:17233"/>
<dbReference type="CTD" id="63916"/>
<dbReference type="DisGeNET" id="63916"/>
<dbReference type="GeneCards" id="ELMO2"/>
<dbReference type="HGNC" id="HGNC:17233">
    <property type="gene designation" value="ELMO2"/>
</dbReference>
<dbReference type="HPA" id="ENSG00000062598">
    <property type="expression patterns" value="Low tissue specificity"/>
</dbReference>
<dbReference type="MalaCards" id="ELMO2"/>
<dbReference type="MIM" id="606421">
    <property type="type" value="gene"/>
</dbReference>
<dbReference type="MIM" id="606893">
    <property type="type" value="phenotype"/>
</dbReference>
<dbReference type="neXtProt" id="NX_Q96JJ3"/>
<dbReference type="OpenTargets" id="ENSG00000062598"/>
<dbReference type="Orphanet" id="140436">
    <property type="disease" value="Primary intraosseous venous malformation"/>
</dbReference>
<dbReference type="Orphanet" id="3019">
    <property type="disease" value="Ramon syndrome"/>
</dbReference>
<dbReference type="PharmGKB" id="PA27755"/>
<dbReference type="VEuPathDB" id="HostDB:ENSG00000062598"/>
<dbReference type="eggNOG" id="KOG2999">
    <property type="taxonomic scope" value="Eukaryota"/>
</dbReference>
<dbReference type="GeneTree" id="ENSGT00940000159236"/>
<dbReference type="HOGENOM" id="CLU_023887_0_0_1"/>
<dbReference type="InParanoid" id="Q96JJ3"/>
<dbReference type="OMA" id="LNHKMLH"/>
<dbReference type="OrthoDB" id="28413at2759"/>
<dbReference type="PAN-GO" id="Q96JJ3">
    <property type="GO annotations" value="2 GO annotations based on evolutionary models"/>
</dbReference>
<dbReference type="PhylomeDB" id="Q96JJ3"/>
<dbReference type="TreeFam" id="TF312966"/>
<dbReference type="PathwayCommons" id="Q96JJ3"/>
<dbReference type="Reactome" id="R-HSA-2029482">
    <property type="pathway name" value="Regulation of actin dynamics for phagocytic cup formation"/>
</dbReference>
<dbReference type="Reactome" id="R-HSA-4420097">
    <property type="pathway name" value="VEGFA-VEGFR2 Pathway"/>
</dbReference>
<dbReference type="Reactome" id="R-HSA-8849471">
    <property type="pathway name" value="PTK6 Regulates RHO GTPases, RAS GTPase and MAP kinases"/>
</dbReference>
<dbReference type="Reactome" id="R-HSA-9013408">
    <property type="pathway name" value="RHOG GTPase cycle"/>
</dbReference>
<dbReference type="Reactome" id="R-HSA-9664422">
    <property type="pathway name" value="FCGR3A-mediated phagocytosis"/>
</dbReference>
<dbReference type="SignaLink" id="Q96JJ3"/>
<dbReference type="SIGNOR" id="Q96JJ3"/>
<dbReference type="BioGRID-ORCS" id="63916">
    <property type="hits" value="163 hits in 1164 CRISPR screens"/>
</dbReference>
<dbReference type="CD-CODE" id="FB4E32DD">
    <property type="entry name" value="Presynaptic clusters and postsynaptic densities"/>
</dbReference>
<dbReference type="ChiTaRS" id="ELMO2">
    <property type="organism name" value="human"/>
</dbReference>
<dbReference type="GeneWiki" id="ELMO2"/>
<dbReference type="GenomeRNAi" id="63916"/>
<dbReference type="Pharos" id="Q96JJ3">
    <property type="development level" value="Tbio"/>
</dbReference>
<dbReference type="PRO" id="PR:Q96JJ3"/>
<dbReference type="Proteomes" id="UP000005640">
    <property type="component" value="Chromosome 20"/>
</dbReference>
<dbReference type="RNAct" id="Q96JJ3">
    <property type="molecule type" value="protein"/>
</dbReference>
<dbReference type="Bgee" id="ENSG00000062598">
    <property type="expression patterns" value="Expressed in cerebellar hemisphere and 201 other cell types or tissues"/>
</dbReference>
<dbReference type="ExpressionAtlas" id="Q96JJ3">
    <property type="expression patterns" value="baseline and differential"/>
</dbReference>
<dbReference type="GO" id="GO:0005829">
    <property type="term" value="C:cytosol"/>
    <property type="evidence" value="ECO:0000314"/>
    <property type="project" value="HPA"/>
</dbReference>
<dbReference type="GO" id="GO:0016020">
    <property type="term" value="C:membrane"/>
    <property type="evidence" value="ECO:0000314"/>
    <property type="project" value="UniProtKB"/>
</dbReference>
<dbReference type="GO" id="GO:0030971">
    <property type="term" value="F:receptor tyrosine kinase binding"/>
    <property type="evidence" value="ECO:0000353"/>
    <property type="project" value="UniProtKB"/>
</dbReference>
<dbReference type="GO" id="GO:0017124">
    <property type="term" value="F:SH3 domain binding"/>
    <property type="evidence" value="ECO:0007669"/>
    <property type="project" value="UniProtKB-KW"/>
</dbReference>
<dbReference type="GO" id="GO:0007015">
    <property type="term" value="P:actin filament organization"/>
    <property type="evidence" value="ECO:0000318"/>
    <property type="project" value="GO_Central"/>
</dbReference>
<dbReference type="GO" id="GO:0006915">
    <property type="term" value="P:apoptotic process"/>
    <property type="evidence" value="ECO:0007669"/>
    <property type="project" value="UniProtKB-KW"/>
</dbReference>
<dbReference type="GO" id="GO:0060326">
    <property type="term" value="P:cell chemotaxis"/>
    <property type="evidence" value="ECO:0000315"/>
    <property type="project" value="UniProtKB"/>
</dbReference>
<dbReference type="GO" id="GO:0048870">
    <property type="term" value="P:cell motility"/>
    <property type="evidence" value="ECO:0000318"/>
    <property type="project" value="GO_Central"/>
</dbReference>
<dbReference type="GO" id="GO:0006909">
    <property type="term" value="P:phagocytosis"/>
    <property type="evidence" value="ECO:0007669"/>
    <property type="project" value="UniProtKB-KW"/>
</dbReference>
<dbReference type="CDD" id="cd13359">
    <property type="entry name" value="PH_ELMO1_CED-12"/>
    <property type="match status" value="1"/>
</dbReference>
<dbReference type="FunFam" id="1.25.10.10:FF:000049">
    <property type="entry name" value="Engulfment and cell motility 1 (Ced-12 homolog)"/>
    <property type="match status" value="1"/>
</dbReference>
<dbReference type="FunFam" id="2.30.29.30:FF:000053">
    <property type="entry name" value="Engulfment and cell motility protein 1"/>
    <property type="match status" value="1"/>
</dbReference>
<dbReference type="Gene3D" id="6.10.250.810">
    <property type="match status" value="1"/>
</dbReference>
<dbReference type="Gene3D" id="1.25.10.10">
    <property type="entry name" value="Leucine-rich Repeat Variant"/>
    <property type="match status" value="1"/>
</dbReference>
<dbReference type="Gene3D" id="2.30.29.30">
    <property type="entry name" value="Pleckstrin-homology domain (PH domain)/Phosphotyrosine-binding domain (PTB)"/>
    <property type="match status" value="1"/>
</dbReference>
<dbReference type="InterPro" id="IPR011989">
    <property type="entry name" value="ARM-like"/>
</dbReference>
<dbReference type="InterPro" id="IPR016024">
    <property type="entry name" value="ARM-type_fold"/>
</dbReference>
<dbReference type="InterPro" id="IPR024574">
    <property type="entry name" value="ELMO_ARM"/>
</dbReference>
<dbReference type="InterPro" id="IPR006816">
    <property type="entry name" value="ELMO_dom"/>
</dbReference>
<dbReference type="InterPro" id="IPR050868">
    <property type="entry name" value="ELMO_domain-containing"/>
</dbReference>
<dbReference type="InterPro" id="IPR011993">
    <property type="entry name" value="PH-like_dom_sf"/>
</dbReference>
<dbReference type="InterPro" id="IPR001849">
    <property type="entry name" value="PH_domain"/>
</dbReference>
<dbReference type="PANTHER" id="PTHR12771">
    <property type="entry name" value="ENGULFMENT AND CELL MOTILITY"/>
    <property type="match status" value="1"/>
</dbReference>
<dbReference type="PANTHER" id="PTHR12771:SF8">
    <property type="entry name" value="ENGULFMENT AND CELL MOTILITY PROTEIN 2"/>
    <property type="match status" value="1"/>
</dbReference>
<dbReference type="Pfam" id="PF11841">
    <property type="entry name" value="ELMO_ARM"/>
    <property type="match status" value="1"/>
</dbReference>
<dbReference type="Pfam" id="PF04727">
    <property type="entry name" value="ELMO_CED12"/>
    <property type="match status" value="1"/>
</dbReference>
<dbReference type="Pfam" id="PF16457">
    <property type="entry name" value="PH_12"/>
    <property type="match status" value="1"/>
</dbReference>
<dbReference type="SUPFAM" id="SSF48371">
    <property type="entry name" value="ARM repeat"/>
    <property type="match status" value="1"/>
</dbReference>
<dbReference type="SUPFAM" id="SSF50729">
    <property type="entry name" value="PH domain-like"/>
    <property type="match status" value="1"/>
</dbReference>
<dbReference type="PROSITE" id="PS51335">
    <property type="entry name" value="ELMO"/>
    <property type="match status" value="1"/>
</dbReference>
<gene>
    <name type="primary">ELMO2</name>
    <name type="synonym">CED12A</name>
    <name type="synonym">KIAA1834</name>
</gene>
<name>ELMO2_HUMAN</name>
<proteinExistence type="evidence at protein level"/>
<accession>Q96JJ3</accession>
<accession>E1P5T3</accession>
<accession>Q5JVZ6</accession>
<accession>Q7Z5G9</accession>
<accession>Q96CJ2</accession>
<accession>Q96ME5</accession>
<accession>Q96PA9</accession>
<accession>Q9H938</accession>
<accession>Q9H9L5</accession>
<accession>Q9HAH0</accession>
<accession>Q9NQQ6</accession>
<evidence type="ECO:0000250" key="1">
    <source>
        <dbReference type="UniProtKB" id="Q8BHL5"/>
    </source>
</evidence>
<evidence type="ECO:0000255" key="2">
    <source>
        <dbReference type="PROSITE-ProRule" id="PRU00664"/>
    </source>
</evidence>
<evidence type="ECO:0000269" key="3">
    <source>
    </source>
</evidence>
<evidence type="ECO:0000269" key="4">
    <source>
    </source>
</evidence>
<evidence type="ECO:0000269" key="5">
    <source>
    </source>
</evidence>
<evidence type="ECO:0000269" key="6">
    <source>
    </source>
</evidence>
<evidence type="ECO:0000269" key="7">
    <source>
    </source>
</evidence>
<evidence type="ECO:0000303" key="8">
    <source>
    </source>
</evidence>
<evidence type="ECO:0000305" key="9"/>
<evidence type="ECO:0007744" key="10">
    <source>
    </source>
</evidence>
<evidence type="ECO:0007829" key="11">
    <source>
        <dbReference type="PDB" id="6IDX"/>
    </source>
</evidence>
<protein>
    <recommendedName>
        <fullName>Engulfment and cell motility protein 2</fullName>
    </recommendedName>
    <alternativeName>
        <fullName>Protein ced-12 homolog A</fullName>
        <shortName>hCed-12A</shortName>
    </alternativeName>
</protein>
<keyword id="KW-0002">3D-structure</keyword>
<keyword id="KW-0025">Alternative splicing</keyword>
<keyword id="KW-0053">Apoptosis</keyword>
<keyword id="KW-0963">Cytoplasm</keyword>
<keyword id="KW-0472">Membrane</keyword>
<keyword id="KW-0581">Phagocytosis</keyword>
<keyword id="KW-0597">Phosphoprotein</keyword>
<keyword id="KW-1267">Proteomics identification</keyword>
<keyword id="KW-1185">Reference proteome</keyword>
<keyword id="KW-0729">SH3-binding</keyword>
<feature type="chain" id="PRO_0000153714" description="Engulfment and cell motility protein 2">
    <location>
        <begin position="1"/>
        <end position="720"/>
    </location>
</feature>
<feature type="domain" description="ELMO" evidence="2">
    <location>
        <begin position="311"/>
        <end position="485"/>
    </location>
</feature>
<feature type="domain" description="PH">
    <location>
        <begin position="553"/>
        <end position="674"/>
    </location>
</feature>
<feature type="short sequence motif" description="SH3-binding">
    <location>
        <begin position="700"/>
        <end position="707"/>
    </location>
</feature>
<feature type="modified residue" description="Phosphotyrosine" evidence="1">
    <location>
        <position position="48"/>
    </location>
</feature>
<feature type="modified residue" description="Phosphoserine" evidence="10">
    <location>
        <position position="503"/>
    </location>
</feature>
<feature type="modified residue" description="Phosphotyrosine" evidence="1">
    <location>
        <position position="717"/>
    </location>
</feature>
<feature type="splice variant" id="VSP_055477" description="In isoform 2." evidence="8">
    <location>
        <begin position="1"/>
        <end position="88"/>
    </location>
</feature>
<feature type="sequence variant" id="VAR_048928" description="In dbSNP:rs34630674.">
    <original>E</original>
    <variation>D</variation>
    <location>
        <position position="695"/>
    </location>
</feature>
<feature type="sequence conflict" description="In Ref. 4; BAB71350." evidence="9" ref="4">
    <original>Y</original>
    <variation>C</variation>
    <location>
        <position position="208"/>
    </location>
</feature>
<feature type="sequence conflict" description="In Ref. 4; BAB13879." evidence="9" ref="4">
    <original>E</original>
    <variation>G</variation>
    <location>
        <position position="299"/>
    </location>
</feature>
<feature type="sequence conflict" description="In Ref. 4; BAB13879." evidence="9" ref="4">
    <original>R</original>
    <variation>P</variation>
    <location>
        <position position="509"/>
    </location>
</feature>
<feature type="sequence conflict" description="In Ref. 4; BAB14210." evidence="9" ref="4">
    <original>D</original>
    <variation>N</variation>
    <location>
        <position position="586"/>
    </location>
</feature>
<feature type="strand" evidence="11">
    <location>
        <begin position="7"/>
        <end position="13"/>
    </location>
</feature>
<feature type="strand" evidence="11">
    <location>
        <begin position="20"/>
        <end position="25"/>
    </location>
</feature>
<feature type="helix" evidence="11">
    <location>
        <begin position="30"/>
        <end position="40"/>
    </location>
</feature>
<feature type="helix" evidence="11">
    <location>
        <begin position="46"/>
        <end position="48"/>
    </location>
</feature>
<feature type="strand" evidence="11">
    <location>
        <begin position="49"/>
        <end position="55"/>
    </location>
</feature>
<feature type="helix" evidence="11">
    <location>
        <begin position="65"/>
        <end position="68"/>
    </location>
</feature>
<feature type="strand" evidence="11">
    <location>
        <begin position="73"/>
        <end position="79"/>
    </location>
</feature>
<feature type="helix" evidence="11">
    <location>
        <begin position="81"/>
        <end position="91"/>
    </location>
</feature>
<feature type="helix" evidence="11">
    <location>
        <begin position="97"/>
        <end position="110"/>
    </location>
</feature>
<feature type="helix" evidence="11">
    <location>
        <begin position="114"/>
        <end position="121"/>
    </location>
</feature>
<feature type="turn" evidence="11">
    <location>
        <begin position="122"/>
        <end position="124"/>
    </location>
</feature>
<feature type="helix" evidence="11">
    <location>
        <begin position="125"/>
        <end position="135"/>
    </location>
</feature>
<feature type="turn" evidence="11">
    <location>
        <begin position="139"/>
        <end position="142"/>
    </location>
</feature>
<feature type="helix" evidence="11">
    <location>
        <begin position="144"/>
        <end position="158"/>
    </location>
</feature>
<feature type="helix" evidence="11">
    <location>
        <begin position="165"/>
        <end position="167"/>
    </location>
</feature>
<feature type="helix" evidence="11">
    <location>
        <begin position="170"/>
        <end position="181"/>
    </location>
</feature>
<feature type="helix" evidence="11">
    <location>
        <begin position="187"/>
        <end position="203"/>
    </location>
</feature>
<feature type="helix" evidence="11">
    <location>
        <begin position="205"/>
        <end position="214"/>
    </location>
</feature>
<feature type="helix" evidence="11">
    <location>
        <begin position="217"/>
        <end position="222"/>
    </location>
</feature>
<feature type="helix" evidence="11">
    <location>
        <begin position="223"/>
        <end position="225"/>
    </location>
</feature>
<feature type="helix" evidence="11">
    <location>
        <begin position="229"/>
        <end position="245"/>
    </location>
</feature>
<feature type="helix" evidence="11">
    <location>
        <begin position="248"/>
        <end position="250"/>
    </location>
</feature>
<feature type="helix" evidence="11">
    <location>
        <begin position="251"/>
        <end position="260"/>
    </location>
</feature>
<feature type="helix" evidence="11">
    <location>
        <begin position="263"/>
        <end position="270"/>
    </location>
</feature>
<feature type="turn" evidence="11">
    <location>
        <begin position="271"/>
        <end position="273"/>
    </location>
</feature>
<feature type="strand" evidence="11">
    <location>
        <begin position="274"/>
        <end position="276"/>
    </location>
</feature>
<feature type="helix" evidence="11">
    <location>
        <begin position="280"/>
        <end position="295"/>
    </location>
</feature>
<feature type="helix" evidence="11">
    <location>
        <begin position="298"/>
        <end position="301"/>
    </location>
</feature>
<feature type="helix" evidence="11">
    <location>
        <begin position="310"/>
        <end position="324"/>
    </location>
</feature>
<feature type="helix" evidence="11">
    <location>
        <begin position="339"/>
        <end position="346"/>
    </location>
</feature>
<feature type="turn" evidence="11">
    <location>
        <begin position="347"/>
        <end position="349"/>
    </location>
</feature>
<feature type="helix" evidence="11">
    <location>
        <begin position="350"/>
        <end position="352"/>
    </location>
</feature>
<feature type="strand" evidence="11">
    <location>
        <begin position="355"/>
        <end position="358"/>
    </location>
</feature>
<feature type="helix" evidence="11">
    <location>
        <begin position="360"/>
        <end position="365"/>
    </location>
</feature>
<feature type="turn" evidence="11">
    <location>
        <begin position="367"/>
        <end position="369"/>
    </location>
</feature>
<feature type="helix" evidence="11">
    <location>
        <begin position="370"/>
        <end position="383"/>
    </location>
</feature>
<feature type="helix" evidence="11">
    <location>
        <begin position="385"/>
        <end position="393"/>
    </location>
</feature>
<feature type="helix" evidence="11">
    <location>
        <begin position="406"/>
        <end position="421"/>
    </location>
</feature>
<feature type="turn" evidence="11">
    <location>
        <begin position="422"/>
        <end position="424"/>
    </location>
</feature>
<feature type="helix" evidence="11">
    <location>
        <begin position="436"/>
        <end position="440"/>
    </location>
</feature>
<feature type="helix" evidence="11">
    <location>
        <begin position="444"/>
        <end position="462"/>
    </location>
</feature>
<feature type="helix" evidence="11">
    <location>
        <begin position="467"/>
        <end position="469"/>
    </location>
</feature>
<feature type="helix" evidence="11">
    <location>
        <begin position="470"/>
        <end position="484"/>
    </location>
</feature>
<feature type="helix" evidence="11">
    <location>
        <begin position="485"/>
        <end position="487"/>
    </location>
</feature>
<feature type="helix" evidence="11">
    <location>
        <begin position="492"/>
        <end position="500"/>
    </location>
</feature>
<feature type="helix" evidence="11">
    <location>
        <begin position="504"/>
        <end position="514"/>
    </location>
</feature>